<proteinExistence type="inferred from homology"/>
<keyword id="KW-0378">Hydrolase</keyword>
<keyword id="KW-0460">Magnesium</keyword>
<keyword id="KW-1185">Reference proteome</keyword>
<sequence>MKIYTYHTPERVPADWQPDCAIAVDVLRATTTIATALAAGAEAVQVFSDLTELEQVSQQWPAAKRIRVGERGGKKVAGFDMGNSPAECLPERVRGCRLFMSTTNGTRSLERIQASPLVLAAALVNRAAVAEFVQKHQPETVWIVGSGWEGSYSLEDTVCAGALIHYLWGQQDAPLETLAGNDETIAATALYRYYQDDLLTLFHHSSHGQRLLNLGNEADLKYCAQVDILAIVPWQVSPKLLTKA</sequence>
<name>COMB_THEVB</name>
<accession>Q8DLS5</accession>
<reference key="1">
    <citation type="journal article" date="2002" name="DNA Res.">
        <title>Complete genome structure of the thermophilic cyanobacterium Thermosynechococcus elongatus BP-1.</title>
        <authorList>
            <person name="Nakamura Y."/>
            <person name="Kaneko T."/>
            <person name="Sato S."/>
            <person name="Ikeuchi M."/>
            <person name="Katoh H."/>
            <person name="Sasamoto S."/>
            <person name="Watanabe A."/>
            <person name="Iriguchi M."/>
            <person name="Kawashima K."/>
            <person name="Kimura T."/>
            <person name="Kishida Y."/>
            <person name="Kiyokawa C."/>
            <person name="Kohara M."/>
            <person name="Matsumoto M."/>
            <person name="Matsuno A."/>
            <person name="Nakazaki N."/>
            <person name="Shimpo S."/>
            <person name="Sugimoto M."/>
            <person name="Takeuchi C."/>
            <person name="Yamada M."/>
            <person name="Tabata S."/>
        </authorList>
    </citation>
    <scope>NUCLEOTIDE SEQUENCE [LARGE SCALE GENOMIC DNA]</scope>
    <source>
        <strain>NIES-2133 / IAM M-273 / BP-1</strain>
    </source>
</reference>
<comment type="catalytic activity">
    <reaction evidence="1">
        <text>(2R)-O-phospho-3-sulfolactate + H2O = (2R)-3-sulfolactate + phosphate</text>
        <dbReference type="Rhea" id="RHEA:23416"/>
        <dbReference type="ChEBI" id="CHEBI:15377"/>
        <dbReference type="ChEBI" id="CHEBI:15597"/>
        <dbReference type="ChEBI" id="CHEBI:43474"/>
        <dbReference type="ChEBI" id="CHEBI:58738"/>
        <dbReference type="EC" id="3.1.3.71"/>
    </reaction>
</comment>
<comment type="cofactor">
    <cofactor evidence="1">
        <name>Mg(2+)</name>
        <dbReference type="ChEBI" id="CHEBI:18420"/>
    </cofactor>
</comment>
<comment type="similarity">
    <text evidence="1">Belongs to the ComB family.</text>
</comment>
<gene>
    <name evidence="1" type="primary">comB</name>
    <name type="ordered locus">tll0403</name>
</gene>
<organism>
    <name type="scientific">Thermosynechococcus vestitus (strain NIES-2133 / IAM M-273 / BP-1)</name>
    <dbReference type="NCBI Taxonomy" id="197221"/>
    <lineage>
        <taxon>Bacteria</taxon>
        <taxon>Bacillati</taxon>
        <taxon>Cyanobacteriota</taxon>
        <taxon>Cyanophyceae</taxon>
        <taxon>Acaryochloridales</taxon>
        <taxon>Thermosynechococcaceae</taxon>
        <taxon>Thermosynechococcus</taxon>
    </lineage>
</organism>
<dbReference type="EC" id="3.1.3.71" evidence="1"/>
<dbReference type="EMBL" id="BA000039">
    <property type="protein sequence ID" value="BAC07955.1"/>
    <property type="molecule type" value="Genomic_DNA"/>
</dbReference>
<dbReference type="RefSeq" id="NP_681193.1">
    <property type="nucleotide sequence ID" value="NC_004113.1"/>
</dbReference>
<dbReference type="RefSeq" id="WP_011056258.1">
    <property type="nucleotide sequence ID" value="NC_004113.1"/>
</dbReference>
<dbReference type="SMR" id="Q8DLS5"/>
<dbReference type="EnsemblBacteria" id="BAC07955">
    <property type="protein sequence ID" value="BAC07955"/>
    <property type="gene ID" value="BAC07955"/>
</dbReference>
<dbReference type="KEGG" id="tel:tll0403"/>
<dbReference type="PATRIC" id="fig|197221.4.peg.426"/>
<dbReference type="eggNOG" id="COG2045">
    <property type="taxonomic scope" value="Bacteria"/>
</dbReference>
<dbReference type="Proteomes" id="UP000000440">
    <property type="component" value="Chromosome"/>
</dbReference>
<dbReference type="GO" id="GO:0050532">
    <property type="term" value="F:2-phosphosulfolactate phosphatase activity"/>
    <property type="evidence" value="ECO:0007669"/>
    <property type="project" value="UniProtKB-UniRule"/>
</dbReference>
<dbReference type="GO" id="GO:0000287">
    <property type="term" value="F:magnesium ion binding"/>
    <property type="evidence" value="ECO:0007669"/>
    <property type="project" value="UniProtKB-UniRule"/>
</dbReference>
<dbReference type="GO" id="GO:0050545">
    <property type="term" value="F:sulfopyruvate decarboxylase activity"/>
    <property type="evidence" value="ECO:0007669"/>
    <property type="project" value="TreeGrafter"/>
</dbReference>
<dbReference type="FunFam" id="3.90.1560.10:FF:000001">
    <property type="entry name" value="Probable 2-phosphosulfolactate phosphatase"/>
    <property type="match status" value="1"/>
</dbReference>
<dbReference type="Gene3D" id="3.90.1560.10">
    <property type="entry name" value="ComB-like"/>
    <property type="match status" value="1"/>
</dbReference>
<dbReference type="HAMAP" id="MF_00490">
    <property type="entry name" value="ComB"/>
    <property type="match status" value="1"/>
</dbReference>
<dbReference type="InterPro" id="IPR005238">
    <property type="entry name" value="ComB-like"/>
</dbReference>
<dbReference type="InterPro" id="IPR036702">
    <property type="entry name" value="ComB-like_sf"/>
</dbReference>
<dbReference type="NCBIfam" id="NF002056">
    <property type="entry name" value="PRK00886.1-5"/>
    <property type="match status" value="1"/>
</dbReference>
<dbReference type="PANTHER" id="PTHR37311">
    <property type="entry name" value="2-PHOSPHOSULFOLACTATE PHOSPHATASE-RELATED"/>
    <property type="match status" value="1"/>
</dbReference>
<dbReference type="PANTHER" id="PTHR37311:SF1">
    <property type="entry name" value="2-PHOSPHOSULFOLACTATE PHOSPHATASE-RELATED"/>
    <property type="match status" value="1"/>
</dbReference>
<dbReference type="Pfam" id="PF04029">
    <property type="entry name" value="2-ph_phosp"/>
    <property type="match status" value="1"/>
</dbReference>
<dbReference type="SUPFAM" id="SSF142823">
    <property type="entry name" value="ComB-like"/>
    <property type="match status" value="1"/>
</dbReference>
<evidence type="ECO:0000255" key="1">
    <source>
        <dbReference type="HAMAP-Rule" id="MF_00490"/>
    </source>
</evidence>
<feature type="chain" id="PRO_0000081474" description="Probable 2-phosphosulfolactate phosphatase">
    <location>
        <begin position="1"/>
        <end position="244"/>
    </location>
</feature>
<protein>
    <recommendedName>
        <fullName evidence="1">Probable 2-phosphosulfolactate phosphatase</fullName>
        <ecNumber evidence="1">3.1.3.71</ecNumber>
    </recommendedName>
</protein>